<comment type="cofactor">
    <cofactor evidence="1">
        <name>Zn(2+)</name>
        <dbReference type="ChEBI" id="CHEBI:29105"/>
    </cofactor>
    <text evidence="1">Binds 1 zinc ion.</text>
</comment>
<comment type="subcellular location">
    <subcellularLocation>
        <location evidence="1">Cytoplasm</location>
    </subcellularLocation>
</comment>
<comment type="similarity">
    <text evidence="1">Belongs to the SprT family.</text>
</comment>
<feature type="chain" id="PRO_1000046520" description="Protein SprT-like">
    <location>
        <begin position="1"/>
        <end position="145"/>
    </location>
</feature>
<feature type="domain" description="SprT-like" evidence="1">
    <location>
        <begin position="5"/>
        <end position="141"/>
    </location>
</feature>
<feature type="active site" evidence="1">
    <location>
        <position position="65"/>
    </location>
</feature>
<feature type="binding site" evidence="1">
    <location>
        <position position="64"/>
    </location>
    <ligand>
        <name>Zn(2+)</name>
        <dbReference type="ChEBI" id="CHEBI:29105"/>
    </ligand>
</feature>
<feature type="binding site" evidence="1">
    <location>
        <position position="68"/>
    </location>
    <ligand>
        <name>Zn(2+)</name>
        <dbReference type="ChEBI" id="CHEBI:29105"/>
    </ligand>
</feature>
<protein>
    <recommendedName>
        <fullName evidence="1">Protein SprT-like</fullName>
    </recommendedName>
</protein>
<name>SPRTL_STRSV</name>
<reference key="1">
    <citation type="journal article" date="2007" name="J. Bacteriol.">
        <title>Genome of the opportunistic pathogen Streptococcus sanguinis.</title>
        <authorList>
            <person name="Xu P."/>
            <person name="Alves J.M."/>
            <person name="Kitten T."/>
            <person name="Brown A."/>
            <person name="Chen Z."/>
            <person name="Ozaki L.S."/>
            <person name="Manque P."/>
            <person name="Ge X."/>
            <person name="Serrano M.G."/>
            <person name="Puiu D."/>
            <person name="Hendricks S."/>
            <person name="Wang Y."/>
            <person name="Chaplin M.D."/>
            <person name="Akan D."/>
            <person name="Paik S."/>
            <person name="Peterson D.L."/>
            <person name="Macrina F.L."/>
            <person name="Buck G.A."/>
        </authorList>
    </citation>
    <scope>NUCLEOTIDE SEQUENCE [LARGE SCALE GENOMIC DNA]</scope>
    <source>
        <strain>SK36</strain>
    </source>
</reference>
<dbReference type="EMBL" id="CP000387">
    <property type="protein sequence ID" value="ABN44941.1"/>
    <property type="molecule type" value="Genomic_DNA"/>
</dbReference>
<dbReference type="RefSeq" id="WP_002897215.1">
    <property type="nucleotide sequence ID" value="NC_009009.1"/>
</dbReference>
<dbReference type="RefSeq" id="YP_001035491.1">
    <property type="nucleotide sequence ID" value="NC_009009.1"/>
</dbReference>
<dbReference type="STRING" id="388919.SSA_1550"/>
<dbReference type="KEGG" id="ssa:SSA_1550"/>
<dbReference type="PATRIC" id="fig|388919.9.peg.1471"/>
<dbReference type="eggNOG" id="COG3091">
    <property type="taxonomic scope" value="Bacteria"/>
</dbReference>
<dbReference type="HOGENOM" id="CLU_123820_0_0_9"/>
<dbReference type="OrthoDB" id="9799909at2"/>
<dbReference type="Proteomes" id="UP000002148">
    <property type="component" value="Chromosome"/>
</dbReference>
<dbReference type="GO" id="GO:0005737">
    <property type="term" value="C:cytoplasm"/>
    <property type="evidence" value="ECO:0007669"/>
    <property type="project" value="UniProtKB-SubCell"/>
</dbReference>
<dbReference type="GO" id="GO:0008270">
    <property type="term" value="F:zinc ion binding"/>
    <property type="evidence" value="ECO:0007669"/>
    <property type="project" value="UniProtKB-UniRule"/>
</dbReference>
<dbReference type="GO" id="GO:0006950">
    <property type="term" value="P:response to stress"/>
    <property type="evidence" value="ECO:0007669"/>
    <property type="project" value="UniProtKB-ARBA"/>
</dbReference>
<dbReference type="HAMAP" id="MF_00745">
    <property type="entry name" value="SprT_like"/>
    <property type="match status" value="1"/>
</dbReference>
<dbReference type="InterPro" id="IPR006640">
    <property type="entry name" value="SprT-like_domain"/>
</dbReference>
<dbReference type="InterPro" id="IPR035240">
    <property type="entry name" value="SprT_Zn_ribbon"/>
</dbReference>
<dbReference type="InterPro" id="IPR023524">
    <property type="entry name" value="Uncharacterised_SprT-like"/>
</dbReference>
<dbReference type="NCBIfam" id="NF003339">
    <property type="entry name" value="PRK04351.1"/>
    <property type="match status" value="1"/>
</dbReference>
<dbReference type="Pfam" id="PF10263">
    <property type="entry name" value="SprT-like"/>
    <property type="match status" value="1"/>
</dbReference>
<dbReference type="Pfam" id="PF17283">
    <property type="entry name" value="Zn_ribbon_SprT"/>
    <property type="match status" value="1"/>
</dbReference>
<dbReference type="SMART" id="SM00731">
    <property type="entry name" value="SprT"/>
    <property type="match status" value="1"/>
</dbReference>
<accession>A3CP36</accession>
<proteinExistence type="inferred from homology"/>
<keyword id="KW-0963">Cytoplasm</keyword>
<keyword id="KW-0479">Metal-binding</keyword>
<keyword id="KW-1185">Reference proteome</keyword>
<keyword id="KW-0862">Zinc</keyword>
<evidence type="ECO:0000255" key="1">
    <source>
        <dbReference type="HAMAP-Rule" id="MF_00745"/>
    </source>
</evidence>
<sequence>MNLTNYVKQVSVEDFGWEFRHQAYWNKRLRTTGGRFFPKDGHLDFNPKIYETFGLEIFRKIVRHELAHYHLYYQGKGYRHGDRDFKELLKQVDGLRYAPSLSNSQSFLVYECLSCGALIRRRRRVNLQKYRCGRCMGKLRLSEKA</sequence>
<gene>
    <name type="ordered locus">SSA_1550</name>
</gene>
<organism>
    <name type="scientific">Streptococcus sanguinis (strain SK36)</name>
    <dbReference type="NCBI Taxonomy" id="388919"/>
    <lineage>
        <taxon>Bacteria</taxon>
        <taxon>Bacillati</taxon>
        <taxon>Bacillota</taxon>
        <taxon>Bacilli</taxon>
        <taxon>Lactobacillales</taxon>
        <taxon>Streptococcaceae</taxon>
        <taxon>Streptococcus</taxon>
    </lineage>
</organism>